<evidence type="ECO:0000255" key="1">
    <source>
        <dbReference type="HAMAP-Rule" id="MF_01200"/>
    </source>
</evidence>
<protein>
    <recommendedName>
        <fullName evidence="1">Orotidine 5'-phosphate decarboxylase</fullName>
        <ecNumber evidence="1">4.1.1.23</ecNumber>
    </recommendedName>
    <alternativeName>
        <fullName evidence="1">OMP decarboxylase</fullName>
        <shortName evidence="1">OMPDCase</shortName>
        <shortName evidence="1">OMPdecase</shortName>
    </alternativeName>
</protein>
<accession>A5F6Y1</accession>
<accession>C3M1W4</accession>
<reference key="1">
    <citation type="submission" date="2007-03" db="EMBL/GenBank/DDBJ databases">
        <authorList>
            <person name="Heidelberg J."/>
        </authorList>
    </citation>
    <scope>NUCLEOTIDE SEQUENCE [LARGE SCALE GENOMIC DNA]</scope>
    <source>
        <strain>ATCC 39541 / Classical Ogawa 395 / O395</strain>
    </source>
</reference>
<reference key="2">
    <citation type="journal article" date="2008" name="PLoS ONE">
        <title>A recalibrated molecular clock and independent origins for the cholera pandemic clones.</title>
        <authorList>
            <person name="Feng L."/>
            <person name="Reeves P.R."/>
            <person name="Lan R."/>
            <person name="Ren Y."/>
            <person name="Gao C."/>
            <person name="Zhou Z."/>
            <person name="Ren Y."/>
            <person name="Cheng J."/>
            <person name="Wang W."/>
            <person name="Wang J."/>
            <person name="Qian W."/>
            <person name="Li D."/>
            <person name="Wang L."/>
        </authorList>
    </citation>
    <scope>NUCLEOTIDE SEQUENCE [LARGE SCALE GENOMIC DNA]</scope>
    <source>
        <strain>ATCC 39541 / Classical Ogawa 395 / O395</strain>
    </source>
</reference>
<comment type="function">
    <text evidence="1">Catalyzes the decarboxylation of orotidine 5'-monophosphate (OMP) to uridine 5'-monophosphate (UMP).</text>
</comment>
<comment type="catalytic activity">
    <reaction evidence="1">
        <text>orotidine 5'-phosphate + H(+) = UMP + CO2</text>
        <dbReference type="Rhea" id="RHEA:11596"/>
        <dbReference type="ChEBI" id="CHEBI:15378"/>
        <dbReference type="ChEBI" id="CHEBI:16526"/>
        <dbReference type="ChEBI" id="CHEBI:57538"/>
        <dbReference type="ChEBI" id="CHEBI:57865"/>
        <dbReference type="EC" id="4.1.1.23"/>
    </reaction>
</comment>
<comment type="pathway">
    <text evidence="1">Pyrimidine metabolism; UMP biosynthesis via de novo pathway; UMP from orotate: step 2/2.</text>
</comment>
<comment type="subunit">
    <text evidence="1">Homodimer.</text>
</comment>
<comment type="similarity">
    <text evidence="1">Belongs to the OMP decarboxylase family. Type 1 subfamily.</text>
</comment>
<name>PYRF_VIBC3</name>
<sequence>MNDPKVIVALDYDNLADALAFVDKIDPSTCRLKVGKEMFTLFGPDFVRELHKRGFSVFLDLKFHDIPNTCSKAVKAAAELGVWMVNVHASGGERMMAASREILEPYGKERPLLIGVTVLTSMESADLQGIGILSAPQDHVLRLATLAKNAGLDGVVCSAQEASLLKQHLGREFKLVTPGIRPAGSEQGDQRRIMTPAQAIASGSDYLVIGRPITQAAHPEVVLEEINSSLV</sequence>
<feature type="chain" id="PRO_1000073091" description="Orotidine 5'-phosphate decarboxylase">
    <location>
        <begin position="1"/>
        <end position="231"/>
    </location>
</feature>
<feature type="active site" description="Proton donor" evidence="1">
    <location>
        <position position="62"/>
    </location>
</feature>
<feature type="binding site" evidence="1">
    <location>
        <position position="11"/>
    </location>
    <ligand>
        <name>substrate</name>
    </ligand>
</feature>
<feature type="binding site" evidence="1">
    <location>
        <position position="33"/>
    </location>
    <ligand>
        <name>substrate</name>
    </ligand>
</feature>
<feature type="binding site" evidence="1">
    <location>
        <begin position="60"/>
        <end position="69"/>
    </location>
    <ligand>
        <name>substrate</name>
    </ligand>
</feature>
<feature type="binding site" evidence="1">
    <location>
        <position position="120"/>
    </location>
    <ligand>
        <name>substrate</name>
    </ligand>
</feature>
<feature type="binding site" evidence="1">
    <location>
        <position position="181"/>
    </location>
    <ligand>
        <name>substrate</name>
    </ligand>
</feature>
<feature type="binding site" evidence="1">
    <location>
        <position position="190"/>
    </location>
    <ligand>
        <name>substrate</name>
    </ligand>
</feature>
<feature type="binding site" evidence="1">
    <location>
        <position position="210"/>
    </location>
    <ligand>
        <name>substrate</name>
    </ligand>
</feature>
<feature type="binding site" evidence="1">
    <location>
        <position position="211"/>
    </location>
    <ligand>
        <name>substrate</name>
    </ligand>
</feature>
<keyword id="KW-0210">Decarboxylase</keyword>
<keyword id="KW-0456">Lyase</keyword>
<keyword id="KW-0665">Pyrimidine biosynthesis</keyword>
<organism>
    <name type="scientific">Vibrio cholerae serotype O1 (strain ATCC 39541 / Classical Ogawa 395 / O395)</name>
    <dbReference type="NCBI Taxonomy" id="345073"/>
    <lineage>
        <taxon>Bacteria</taxon>
        <taxon>Pseudomonadati</taxon>
        <taxon>Pseudomonadota</taxon>
        <taxon>Gammaproteobacteria</taxon>
        <taxon>Vibrionales</taxon>
        <taxon>Vibrionaceae</taxon>
        <taxon>Vibrio</taxon>
    </lineage>
</organism>
<proteinExistence type="inferred from homology"/>
<dbReference type="EC" id="4.1.1.23" evidence="1"/>
<dbReference type="EMBL" id="CP000627">
    <property type="protein sequence ID" value="ABQ21404.1"/>
    <property type="molecule type" value="Genomic_DNA"/>
</dbReference>
<dbReference type="EMBL" id="CP001235">
    <property type="protein sequence ID" value="ACP10019.1"/>
    <property type="molecule type" value="Genomic_DNA"/>
</dbReference>
<dbReference type="RefSeq" id="WP_000999561.1">
    <property type="nucleotide sequence ID" value="NZ_JAACZH010000001.1"/>
</dbReference>
<dbReference type="SMR" id="A5F6Y1"/>
<dbReference type="KEGG" id="vco:VC0395_A1501"/>
<dbReference type="KEGG" id="vcr:VC395_2026"/>
<dbReference type="PATRIC" id="fig|345073.21.peg.1960"/>
<dbReference type="eggNOG" id="COG0284">
    <property type="taxonomic scope" value="Bacteria"/>
</dbReference>
<dbReference type="HOGENOM" id="CLU_067069_0_0_6"/>
<dbReference type="OrthoDB" id="9806203at2"/>
<dbReference type="UniPathway" id="UPA00070">
    <property type="reaction ID" value="UER00120"/>
</dbReference>
<dbReference type="Proteomes" id="UP000000249">
    <property type="component" value="Chromosome 2"/>
</dbReference>
<dbReference type="GO" id="GO:0005829">
    <property type="term" value="C:cytosol"/>
    <property type="evidence" value="ECO:0007669"/>
    <property type="project" value="TreeGrafter"/>
</dbReference>
<dbReference type="GO" id="GO:0004590">
    <property type="term" value="F:orotidine-5'-phosphate decarboxylase activity"/>
    <property type="evidence" value="ECO:0007669"/>
    <property type="project" value="UniProtKB-UniRule"/>
</dbReference>
<dbReference type="GO" id="GO:0006207">
    <property type="term" value="P:'de novo' pyrimidine nucleobase biosynthetic process"/>
    <property type="evidence" value="ECO:0007669"/>
    <property type="project" value="InterPro"/>
</dbReference>
<dbReference type="GO" id="GO:0044205">
    <property type="term" value="P:'de novo' UMP biosynthetic process"/>
    <property type="evidence" value="ECO:0007669"/>
    <property type="project" value="UniProtKB-UniRule"/>
</dbReference>
<dbReference type="CDD" id="cd04725">
    <property type="entry name" value="OMP_decarboxylase_like"/>
    <property type="match status" value="1"/>
</dbReference>
<dbReference type="FunFam" id="3.20.20.70:FF:000015">
    <property type="entry name" value="Orotidine 5'-phosphate decarboxylase"/>
    <property type="match status" value="1"/>
</dbReference>
<dbReference type="Gene3D" id="3.20.20.70">
    <property type="entry name" value="Aldolase class I"/>
    <property type="match status" value="1"/>
</dbReference>
<dbReference type="HAMAP" id="MF_01200_B">
    <property type="entry name" value="OMPdecase_type1_B"/>
    <property type="match status" value="1"/>
</dbReference>
<dbReference type="InterPro" id="IPR013785">
    <property type="entry name" value="Aldolase_TIM"/>
</dbReference>
<dbReference type="InterPro" id="IPR014732">
    <property type="entry name" value="OMPdecase"/>
</dbReference>
<dbReference type="InterPro" id="IPR018089">
    <property type="entry name" value="OMPdecase_AS"/>
</dbReference>
<dbReference type="InterPro" id="IPR047596">
    <property type="entry name" value="OMPdecase_bac"/>
</dbReference>
<dbReference type="InterPro" id="IPR001754">
    <property type="entry name" value="OMPdeCOase_dom"/>
</dbReference>
<dbReference type="InterPro" id="IPR011060">
    <property type="entry name" value="RibuloseP-bd_barrel"/>
</dbReference>
<dbReference type="NCBIfam" id="NF001273">
    <property type="entry name" value="PRK00230.1"/>
    <property type="match status" value="1"/>
</dbReference>
<dbReference type="NCBIfam" id="TIGR01740">
    <property type="entry name" value="pyrF"/>
    <property type="match status" value="1"/>
</dbReference>
<dbReference type="PANTHER" id="PTHR32119">
    <property type="entry name" value="OROTIDINE 5'-PHOSPHATE DECARBOXYLASE"/>
    <property type="match status" value="1"/>
</dbReference>
<dbReference type="PANTHER" id="PTHR32119:SF2">
    <property type="entry name" value="OROTIDINE 5'-PHOSPHATE DECARBOXYLASE"/>
    <property type="match status" value="1"/>
</dbReference>
<dbReference type="Pfam" id="PF00215">
    <property type="entry name" value="OMPdecase"/>
    <property type="match status" value="1"/>
</dbReference>
<dbReference type="SMART" id="SM00934">
    <property type="entry name" value="OMPdecase"/>
    <property type="match status" value="1"/>
</dbReference>
<dbReference type="SUPFAM" id="SSF51366">
    <property type="entry name" value="Ribulose-phoshate binding barrel"/>
    <property type="match status" value="1"/>
</dbReference>
<dbReference type="PROSITE" id="PS00156">
    <property type="entry name" value="OMPDECASE"/>
    <property type="match status" value="1"/>
</dbReference>
<gene>
    <name evidence="1" type="primary">pyrF</name>
    <name type="ordered locus">VC0395_A1501</name>
    <name type="ordered locus">VC395_2026</name>
</gene>